<name>ECFA2_STRP2</name>
<accession>Q04HV8</accession>
<organism>
    <name type="scientific">Streptococcus pneumoniae serotype 2 (strain D39 / NCTC 7466)</name>
    <dbReference type="NCBI Taxonomy" id="373153"/>
    <lineage>
        <taxon>Bacteria</taxon>
        <taxon>Bacillati</taxon>
        <taxon>Bacillota</taxon>
        <taxon>Bacilli</taxon>
        <taxon>Lactobacillales</taxon>
        <taxon>Streptococcaceae</taxon>
        <taxon>Streptococcus</taxon>
    </lineage>
</organism>
<evidence type="ECO:0000255" key="1">
    <source>
        <dbReference type="HAMAP-Rule" id="MF_01710"/>
    </source>
</evidence>
<comment type="function">
    <text evidence="1">ATP-binding (A) component of a common energy-coupling factor (ECF) ABC-transporter complex. Unlike classic ABC transporters this ECF transporter provides the energy necessary to transport a number of different substrates.</text>
</comment>
<comment type="subunit">
    <text evidence="1">Forms a stable energy-coupling factor (ECF) transporter complex composed of 2 membrane-embedded substrate-binding proteins (S component), 2 ATP-binding proteins (A component) and 2 transmembrane proteins (T component).</text>
</comment>
<comment type="subcellular location">
    <subcellularLocation>
        <location evidence="1">Cell membrane</location>
        <topology evidence="1">Peripheral membrane protein</topology>
    </subcellularLocation>
</comment>
<comment type="similarity">
    <text evidence="1">Belongs to the ABC transporter superfamily. Energy-coupling factor EcfA family.</text>
</comment>
<proteinExistence type="inferred from homology"/>
<protein>
    <recommendedName>
        <fullName evidence="1">Energy-coupling factor transporter ATP-binding protein EcfA2</fullName>
        <shortName evidence="1">ECF transporter A component EcfA2</shortName>
        <ecNumber evidence="1">7.-.-.-</ecNumber>
    </recommendedName>
</protein>
<sequence>MGIALENVNFIYQEGTPLASAALSDVSLTIEDGSYTALIGHTGSGKSTILQLLNGLLVPSQGSVRVFDTLITSTSKNKDIRQIRKQVGLVFQFAENQIFEETVLKDVAFGPQNFGVSEEDAVKTAREKLALVGIDESLFDRSPFELSGGQMRRVAIAGILAMEPSILVLDEPTAGLDPLGRKELMTLFKKLHQSGMTIVLVTHLMDDVAEYANQVYVMEKGRLVKGGKPSDVFQDVVFMEEVQLGVPKITAFCKRLADRGVSFKRLPIKIEEFKESLNG</sequence>
<reference key="1">
    <citation type="journal article" date="2007" name="J. Bacteriol.">
        <title>Genome sequence of Avery's virulent serotype 2 strain D39 of Streptococcus pneumoniae and comparison with that of unencapsulated laboratory strain R6.</title>
        <authorList>
            <person name="Lanie J.A."/>
            <person name="Ng W.-L."/>
            <person name="Kazmierczak K.M."/>
            <person name="Andrzejewski T.M."/>
            <person name="Davidsen T.M."/>
            <person name="Wayne K.J."/>
            <person name="Tettelin H."/>
            <person name="Glass J.I."/>
            <person name="Winkler M.E."/>
        </authorList>
    </citation>
    <scope>NUCLEOTIDE SEQUENCE [LARGE SCALE GENOMIC DNA]</scope>
    <source>
        <strain>D39 / NCTC 7466</strain>
    </source>
</reference>
<keyword id="KW-0067">ATP-binding</keyword>
<keyword id="KW-1003">Cell membrane</keyword>
<keyword id="KW-0472">Membrane</keyword>
<keyword id="KW-0547">Nucleotide-binding</keyword>
<keyword id="KW-1185">Reference proteome</keyword>
<keyword id="KW-1278">Translocase</keyword>
<keyword id="KW-0813">Transport</keyword>
<gene>
    <name evidence="1" type="primary">ecfA2</name>
    <name type="synonym">cbiO2</name>
    <name type="ordered locus">SPD_2047</name>
</gene>
<dbReference type="EC" id="7.-.-.-" evidence="1"/>
<dbReference type="EMBL" id="CP000410">
    <property type="protein sequence ID" value="ABJ55378.1"/>
    <property type="molecule type" value="Genomic_DNA"/>
</dbReference>
<dbReference type="RefSeq" id="WP_000510406.1">
    <property type="nucleotide sequence ID" value="NZ_JAMLJR010000007.1"/>
</dbReference>
<dbReference type="SMR" id="Q04HV8"/>
<dbReference type="PaxDb" id="373153-SPD_2047"/>
<dbReference type="KEGG" id="spd:SPD_2047"/>
<dbReference type="eggNOG" id="COG1122">
    <property type="taxonomic scope" value="Bacteria"/>
</dbReference>
<dbReference type="HOGENOM" id="CLU_000604_1_22_9"/>
<dbReference type="BioCyc" id="SPNE373153:G1G6V-2197-MONOMER"/>
<dbReference type="Proteomes" id="UP000001452">
    <property type="component" value="Chromosome"/>
</dbReference>
<dbReference type="GO" id="GO:0043190">
    <property type="term" value="C:ATP-binding cassette (ABC) transporter complex"/>
    <property type="evidence" value="ECO:0007669"/>
    <property type="project" value="TreeGrafter"/>
</dbReference>
<dbReference type="GO" id="GO:0005524">
    <property type="term" value="F:ATP binding"/>
    <property type="evidence" value="ECO:0007669"/>
    <property type="project" value="UniProtKB-KW"/>
</dbReference>
<dbReference type="GO" id="GO:0016887">
    <property type="term" value="F:ATP hydrolysis activity"/>
    <property type="evidence" value="ECO:0007669"/>
    <property type="project" value="InterPro"/>
</dbReference>
<dbReference type="GO" id="GO:0042626">
    <property type="term" value="F:ATPase-coupled transmembrane transporter activity"/>
    <property type="evidence" value="ECO:0007669"/>
    <property type="project" value="TreeGrafter"/>
</dbReference>
<dbReference type="CDD" id="cd03225">
    <property type="entry name" value="ABC_cobalt_CbiO_domain1"/>
    <property type="match status" value="1"/>
</dbReference>
<dbReference type="FunFam" id="3.40.50.300:FF:000224">
    <property type="entry name" value="Energy-coupling factor transporter ATP-binding protein EcfA"/>
    <property type="match status" value="1"/>
</dbReference>
<dbReference type="Gene3D" id="3.40.50.300">
    <property type="entry name" value="P-loop containing nucleotide triphosphate hydrolases"/>
    <property type="match status" value="1"/>
</dbReference>
<dbReference type="InterPro" id="IPR003593">
    <property type="entry name" value="AAA+_ATPase"/>
</dbReference>
<dbReference type="InterPro" id="IPR003439">
    <property type="entry name" value="ABC_transporter-like_ATP-bd"/>
</dbReference>
<dbReference type="InterPro" id="IPR017871">
    <property type="entry name" value="ABC_transporter-like_CS"/>
</dbReference>
<dbReference type="InterPro" id="IPR015856">
    <property type="entry name" value="ABC_transpr_CbiO/EcfA_su"/>
</dbReference>
<dbReference type="InterPro" id="IPR050095">
    <property type="entry name" value="ECF_ABC_transporter_ATP-bd"/>
</dbReference>
<dbReference type="InterPro" id="IPR030946">
    <property type="entry name" value="EcfA2"/>
</dbReference>
<dbReference type="InterPro" id="IPR027417">
    <property type="entry name" value="P-loop_NTPase"/>
</dbReference>
<dbReference type="NCBIfam" id="TIGR04521">
    <property type="entry name" value="ECF_ATPase_2"/>
    <property type="match status" value="1"/>
</dbReference>
<dbReference type="PANTHER" id="PTHR43553:SF27">
    <property type="entry name" value="ENERGY-COUPLING FACTOR TRANSPORTER ATP-BINDING PROTEIN ECFA2"/>
    <property type="match status" value="1"/>
</dbReference>
<dbReference type="PANTHER" id="PTHR43553">
    <property type="entry name" value="HEAVY METAL TRANSPORTER"/>
    <property type="match status" value="1"/>
</dbReference>
<dbReference type="Pfam" id="PF00005">
    <property type="entry name" value="ABC_tran"/>
    <property type="match status" value="1"/>
</dbReference>
<dbReference type="SMART" id="SM00382">
    <property type="entry name" value="AAA"/>
    <property type="match status" value="1"/>
</dbReference>
<dbReference type="SUPFAM" id="SSF52540">
    <property type="entry name" value="P-loop containing nucleoside triphosphate hydrolases"/>
    <property type="match status" value="1"/>
</dbReference>
<dbReference type="PROSITE" id="PS00211">
    <property type="entry name" value="ABC_TRANSPORTER_1"/>
    <property type="match status" value="1"/>
</dbReference>
<dbReference type="PROSITE" id="PS50893">
    <property type="entry name" value="ABC_TRANSPORTER_2"/>
    <property type="match status" value="1"/>
</dbReference>
<dbReference type="PROSITE" id="PS51246">
    <property type="entry name" value="CBIO"/>
    <property type="match status" value="1"/>
</dbReference>
<feature type="chain" id="PRO_0000287993" description="Energy-coupling factor transporter ATP-binding protein EcfA2">
    <location>
        <begin position="1"/>
        <end position="279"/>
    </location>
</feature>
<feature type="domain" description="ABC transporter" evidence="1">
    <location>
        <begin position="3"/>
        <end position="245"/>
    </location>
</feature>
<feature type="binding site" evidence="1">
    <location>
        <begin position="40"/>
        <end position="47"/>
    </location>
    <ligand>
        <name>ATP</name>
        <dbReference type="ChEBI" id="CHEBI:30616"/>
    </ligand>
</feature>